<dbReference type="EC" id="2.4.2.58" evidence="5"/>
<dbReference type="EMBL" id="CM001224">
    <property type="protein sequence ID" value="AET02336.1"/>
    <property type="molecule type" value="Genomic_DNA"/>
</dbReference>
<dbReference type="EMBL" id="PSQE01000008">
    <property type="protein sequence ID" value="RHN40293.1"/>
    <property type="molecule type" value="Genomic_DNA"/>
</dbReference>
<dbReference type="STRING" id="3880.G7LG31"/>
<dbReference type="PaxDb" id="3880-AET02336"/>
<dbReference type="EnsemblPlants" id="rna46432">
    <property type="protein sequence ID" value="RHN40293.1"/>
    <property type="gene ID" value="gene46432"/>
</dbReference>
<dbReference type="GeneID" id="11443987"/>
<dbReference type="Gramene" id="rna46432">
    <property type="protein sequence ID" value="RHN40293.1"/>
    <property type="gene ID" value="gene46432"/>
</dbReference>
<dbReference type="KEGG" id="mtr:11443987"/>
<dbReference type="eggNOG" id="ENOG502QQNK">
    <property type="taxonomic scope" value="Eukaryota"/>
</dbReference>
<dbReference type="HOGENOM" id="CLU_065254_0_0_1"/>
<dbReference type="OMA" id="AQPPWDK"/>
<dbReference type="OrthoDB" id="10259977at2759"/>
<dbReference type="Proteomes" id="UP000002051">
    <property type="component" value="Chromosome 8"/>
</dbReference>
<dbReference type="Proteomes" id="UP000265566">
    <property type="component" value="Chromosome 8"/>
</dbReference>
<dbReference type="ExpressionAtlas" id="G7LG31">
    <property type="expression patterns" value="differential"/>
</dbReference>
<dbReference type="GO" id="GO:0000139">
    <property type="term" value="C:Golgi membrane"/>
    <property type="evidence" value="ECO:0007669"/>
    <property type="project" value="UniProtKB-SubCell"/>
</dbReference>
<dbReference type="GO" id="GO:0000138">
    <property type="term" value="C:Golgi trans cisterna"/>
    <property type="evidence" value="ECO:0007669"/>
    <property type="project" value="EnsemblPlants"/>
</dbReference>
<dbReference type="GO" id="GO:1990585">
    <property type="term" value="F:hydroxyproline O-arabinosyltransferase activity"/>
    <property type="evidence" value="ECO:0007669"/>
    <property type="project" value="UniProtKB-EC"/>
</dbReference>
<dbReference type="InterPro" id="IPR056508">
    <property type="entry name" value="HPAT-like"/>
</dbReference>
<dbReference type="InterPro" id="IPR044845">
    <property type="entry name" value="HPAT/SRGT1-like"/>
</dbReference>
<dbReference type="PANTHER" id="PTHR31485:SF36">
    <property type="entry name" value="HYDROXYPROLINE O-ARABINOSYLTRANSFERASE 3"/>
    <property type="match status" value="1"/>
</dbReference>
<dbReference type="PANTHER" id="PTHR31485">
    <property type="entry name" value="PEPTIDYL SERINE ALPHA-GALACTOSYLTRANSFERASE"/>
    <property type="match status" value="1"/>
</dbReference>
<dbReference type="Pfam" id="PF23452">
    <property type="entry name" value="HPAT"/>
    <property type="match status" value="1"/>
</dbReference>
<accession>G7LG31</accession>
<feature type="chain" id="PRO_5014574267" description="Hydroxyproline O-arabinosyltransferase RDN2">
    <location>
        <begin position="1"/>
        <end position="360"/>
    </location>
</feature>
<feature type="transmembrane region" description="Helical; Signal-anchor" evidence="2">
    <location>
        <begin position="13"/>
        <end position="33"/>
    </location>
</feature>
<keyword id="KW-0328">Glycosyltransferase</keyword>
<keyword id="KW-0333">Golgi apparatus</keyword>
<keyword id="KW-0472">Membrane</keyword>
<keyword id="KW-1185">Reference proteome</keyword>
<keyword id="KW-0735">Signal-anchor</keyword>
<keyword id="KW-0808">Transferase</keyword>
<keyword id="KW-0812">Transmembrane</keyword>
<keyword id="KW-1133">Transmembrane helix</keyword>
<proteinExistence type="inferred from homology"/>
<gene>
    <name evidence="4" type="primary">RDN2</name>
    <name evidence="7" type="ordered locus">MTR_8g039290</name>
    <name evidence="8" type="ORF">MtrunA17_Chr8g0353191</name>
</gene>
<evidence type="ECO:0000250" key="1">
    <source>
        <dbReference type="UniProtKB" id="E9KID2"/>
    </source>
</evidence>
<evidence type="ECO:0000255" key="2"/>
<evidence type="ECO:0000269" key="3">
    <source>
    </source>
</evidence>
<evidence type="ECO:0000303" key="4">
    <source>
    </source>
</evidence>
<evidence type="ECO:0000305" key="5"/>
<evidence type="ECO:0000305" key="6">
    <source>
    </source>
</evidence>
<evidence type="ECO:0000312" key="7">
    <source>
        <dbReference type="EMBL" id="AET02336.1"/>
    </source>
</evidence>
<evidence type="ECO:0000312" key="8">
    <source>
        <dbReference type="EMBL" id="RHN40293.1"/>
    </source>
</evidence>
<comment type="function">
    <text evidence="1 3 6">Glycosyltransferase involved in the O-arabinosylation of several proteins including extensins and small signaling peptides (By similarity). Catalyzes the transfer of the initial L-arabinose to the hydroxyl group of Hyp residues (By similarity). Probably involved in the arabinosylation of CLAVATA3/ESR-related (CLE) signaling peptides that move from root to shoot, to interact with SUNN receptor kinase signaling that regulates nodulation (Probable). Involved in long distance nodulation signaling events (PubMed:28592666). Involved in the autoregulation of nodulation (AON), a long distance systemic signaling from root to shoot and back again, which allows legumes to limit the number of root nodules formed based on available nitrogen and previous rhizobial colonization (PubMed:28592666). Functions in the root, upstream of the shoot receptor kinase SUNN and via CLE peptide, to control AON (PubMed:28592666).</text>
</comment>
<comment type="catalytic activity">
    <reaction evidence="5">
        <text>trans-4-hydroxy-L-prolyl-[protein] + UDP-beta-L-arabinofuranose = O-(beta-L-arabinofuranosyl)-trans-4-hydroxy-L-prolyl-[protein] + UDP + H(+)</text>
        <dbReference type="Rhea" id="RHEA:49472"/>
        <dbReference type="Rhea" id="RHEA-COMP:12408"/>
        <dbReference type="Rhea" id="RHEA-COMP:12409"/>
        <dbReference type="ChEBI" id="CHEBI:15378"/>
        <dbReference type="ChEBI" id="CHEBI:58223"/>
        <dbReference type="ChEBI" id="CHEBI:61463"/>
        <dbReference type="ChEBI" id="CHEBI:61965"/>
        <dbReference type="ChEBI" id="CHEBI:131610"/>
        <dbReference type="EC" id="2.4.2.58"/>
    </reaction>
    <physiologicalReaction direction="left-to-right" evidence="5">
        <dbReference type="Rhea" id="RHEA:49473"/>
    </physiologicalReaction>
</comment>
<comment type="subcellular location">
    <subcellularLocation>
        <location evidence="1">Golgi apparatus membrane</location>
        <topology evidence="2">Single-pass type II membrane protein</topology>
    </subcellularLocation>
</comment>
<sequence length="360" mass="41017">MARASPLLMICLVLGSSFATYNLVTMIIHYGSADSLATEDGGLFFDPIVEMPEHVKNTKTSKAPFHIALTATDAIYNKWQCRIMYYWYKKQRSLPGSEMGGFTRILHSGKADNLMDEIPTVVVDPLPEGLDRGYVVLNRPWAFVQWLEKANIEEEYILMAEPDHVFVRPLPNLAFGENPAAFPFFYIKPKENEKIVRKYYPEENGPVTNVDPIGNSPVIIRKDLIAKIAPTWMNISMKMKEDPETDKAFGWVLEMYGYAVASALHGVRHILRKDFMLQPPWDTETFNKYIIHYTYGCDYNLKGELTYGKIGEWRFDKRSHLRGPPPRNLPLPPPGVPESVATLVKMVNEASANIPNWDTL</sequence>
<organism>
    <name type="scientific">Medicago truncatula</name>
    <name type="common">Barrel medic</name>
    <name type="synonym">Medicago tribuloides</name>
    <dbReference type="NCBI Taxonomy" id="3880"/>
    <lineage>
        <taxon>Eukaryota</taxon>
        <taxon>Viridiplantae</taxon>
        <taxon>Streptophyta</taxon>
        <taxon>Embryophyta</taxon>
        <taxon>Tracheophyta</taxon>
        <taxon>Spermatophyta</taxon>
        <taxon>Magnoliopsida</taxon>
        <taxon>eudicotyledons</taxon>
        <taxon>Gunneridae</taxon>
        <taxon>Pentapetalae</taxon>
        <taxon>rosids</taxon>
        <taxon>fabids</taxon>
        <taxon>Fabales</taxon>
        <taxon>Fabaceae</taxon>
        <taxon>Papilionoideae</taxon>
        <taxon>50 kb inversion clade</taxon>
        <taxon>NPAAA clade</taxon>
        <taxon>Hologalegina</taxon>
        <taxon>IRL clade</taxon>
        <taxon>Trifolieae</taxon>
        <taxon>Medicago</taxon>
    </lineage>
</organism>
<name>RDN2_MEDTR</name>
<reference key="1">
    <citation type="journal article" date="2011" name="Nature">
        <title>The Medicago genome provides insight into the evolution of rhizobial symbioses.</title>
        <authorList>
            <person name="Young N.D."/>
            <person name="Debelle F."/>
            <person name="Oldroyd G.E.D."/>
            <person name="Geurts R."/>
            <person name="Cannon S.B."/>
            <person name="Udvardi M.K."/>
            <person name="Benedito V.A."/>
            <person name="Mayer K.F.X."/>
            <person name="Gouzy J."/>
            <person name="Schoof H."/>
            <person name="Van de Peer Y."/>
            <person name="Proost S."/>
            <person name="Cook D.R."/>
            <person name="Meyers B.C."/>
            <person name="Spannagl M."/>
            <person name="Cheung F."/>
            <person name="De Mita S."/>
            <person name="Krishnakumar V."/>
            <person name="Gundlach H."/>
            <person name="Zhou S."/>
            <person name="Mudge J."/>
            <person name="Bharti A.K."/>
            <person name="Murray J.D."/>
            <person name="Naoumkina M.A."/>
            <person name="Rosen B."/>
            <person name="Silverstein K.A.T."/>
            <person name="Tang H."/>
            <person name="Rombauts S."/>
            <person name="Zhao P.X."/>
            <person name="Zhou P."/>
            <person name="Barbe V."/>
            <person name="Bardou P."/>
            <person name="Bechner M."/>
            <person name="Bellec A."/>
            <person name="Berger A."/>
            <person name="Berges H."/>
            <person name="Bidwell S."/>
            <person name="Bisseling T."/>
            <person name="Choisne N."/>
            <person name="Couloux A."/>
            <person name="Denny R."/>
            <person name="Deshpande S."/>
            <person name="Dai X."/>
            <person name="Doyle J.J."/>
            <person name="Dudez A.-M."/>
            <person name="Farmer A.D."/>
            <person name="Fouteau S."/>
            <person name="Franken C."/>
            <person name="Gibelin C."/>
            <person name="Gish J."/>
            <person name="Goldstein S."/>
            <person name="Gonzalez A.J."/>
            <person name="Green P.J."/>
            <person name="Hallab A."/>
            <person name="Hartog M."/>
            <person name="Hua A."/>
            <person name="Humphray S.J."/>
            <person name="Jeong D.-H."/>
            <person name="Jing Y."/>
            <person name="Jocker A."/>
            <person name="Kenton S.M."/>
            <person name="Kim D.-J."/>
            <person name="Klee K."/>
            <person name="Lai H."/>
            <person name="Lang C."/>
            <person name="Lin S."/>
            <person name="Macmil S.L."/>
            <person name="Magdelenat G."/>
            <person name="Matthews L."/>
            <person name="McCorrison J."/>
            <person name="Monaghan E.L."/>
            <person name="Mun J.-H."/>
            <person name="Najar F.Z."/>
            <person name="Nicholson C."/>
            <person name="Noirot C."/>
            <person name="O'Bleness M."/>
            <person name="Paule C.R."/>
            <person name="Poulain J."/>
            <person name="Prion F."/>
            <person name="Qin B."/>
            <person name="Qu C."/>
            <person name="Retzel E.F."/>
            <person name="Riddle C."/>
            <person name="Sallet E."/>
            <person name="Samain S."/>
            <person name="Samson N."/>
            <person name="Sanders I."/>
            <person name="Saurat O."/>
            <person name="Scarpelli C."/>
            <person name="Schiex T."/>
            <person name="Segurens B."/>
            <person name="Severin A.J."/>
            <person name="Sherrier D.J."/>
            <person name="Shi R."/>
            <person name="Sims S."/>
            <person name="Singer S.R."/>
            <person name="Sinharoy S."/>
            <person name="Sterck L."/>
            <person name="Viollet A."/>
            <person name="Wang B.-B."/>
            <person name="Wang K."/>
            <person name="Wang M."/>
            <person name="Wang X."/>
            <person name="Warfsmann J."/>
            <person name="Weissenbach J."/>
            <person name="White D.D."/>
            <person name="White J.D."/>
            <person name="Wiley G.B."/>
            <person name="Wincker P."/>
            <person name="Xing Y."/>
            <person name="Yang L."/>
            <person name="Yao Z."/>
            <person name="Ying F."/>
            <person name="Zhai J."/>
            <person name="Zhou L."/>
            <person name="Zuber A."/>
            <person name="Denarie J."/>
            <person name="Dixon R.A."/>
            <person name="May G.D."/>
            <person name="Schwartz D.C."/>
            <person name="Rogers J."/>
            <person name="Quetier F."/>
            <person name="Town C.D."/>
            <person name="Roe B.A."/>
        </authorList>
    </citation>
    <scope>NUCLEOTIDE SEQUENCE [LARGE SCALE GENOMIC DNA]</scope>
    <source>
        <strain>cv. Jemalong A17</strain>
    </source>
</reference>
<reference key="2">
    <citation type="journal article" date="2014" name="BMC Genomics">
        <title>An improved genome release (version Mt4.0) for the model legume Medicago truncatula.</title>
        <authorList>
            <person name="Tang H."/>
            <person name="Krishnakumar V."/>
            <person name="Bidwell S."/>
            <person name="Rosen B."/>
            <person name="Chan A."/>
            <person name="Zhou S."/>
            <person name="Gentzbittel L."/>
            <person name="Childs K.L."/>
            <person name="Yandell M."/>
            <person name="Gundlach H."/>
            <person name="Mayer K.F."/>
            <person name="Schwartz D.C."/>
            <person name="Town C.D."/>
        </authorList>
    </citation>
    <scope>GENOME REANNOTATION</scope>
    <source>
        <strain>cv. Jemalong A17</strain>
    </source>
</reference>
<reference key="3">
    <citation type="journal article" date="2018" name="Nat. Plants">
        <title>Whole-genome landscape of Medicago truncatula symbiotic genes.</title>
        <authorList>
            <person name="Pecrix Y."/>
            <person name="Staton S.E."/>
            <person name="Sallet E."/>
            <person name="Lelandais-Briere C."/>
            <person name="Moreau S."/>
            <person name="Carrere S."/>
            <person name="Blein T."/>
            <person name="Jardinaud M.F."/>
            <person name="Latrasse D."/>
            <person name="Zouine M."/>
            <person name="Zahm M."/>
            <person name="Kreplak J."/>
            <person name="Mayjonade B."/>
            <person name="Satge C."/>
            <person name="Perez M."/>
            <person name="Cauet S."/>
            <person name="Marande W."/>
            <person name="Chantry-Darmon C."/>
            <person name="Lopez-Roques C."/>
            <person name="Bouchez O."/>
            <person name="Berard A."/>
            <person name="Debelle F."/>
            <person name="Munos S."/>
            <person name="Bendahmane A."/>
            <person name="Berges H."/>
            <person name="Niebel A."/>
            <person name="Buitink J."/>
            <person name="Frugier F."/>
            <person name="Benhamed M."/>
            <person name="Crespi M."/>
            <person name="Gouzy J."/>
            <person name="Gamas P."/>
        </authorList>
    </citation>
    <scope>NUCLEOTIDE SEQUENCE [LARGE SCALE GENOMIC DNA]</scope>
    <source>
        <strain>cv. Jemalong A17</strain>
    </source>
</reference>
<reference key="4">
    <citation type="journal article" date="2017" name="Plant Physiol.">
        <title>ROOT DETERMINED NODULATION1 is required for M. truncatula CLE12, but not CLE13, peptide signaling through the SUNN receptor kinase.</title>
        <authorList>
            <person name="Kassaw T."/>
            <person name="Nowak S."/>
            <person name="Schnabel E."/>
            <person name="Frugoli J."/>
        </authorList>
    </citation>
    <scope>FUNCTION</scope>
</reference>
<protein>
    <recommendedName>
        <fullName evidence="5">Hydroxyproline O-arabinosyltransferase RDN2</fullName>
        <ecNumber evidence="5">2.4.2.58</ecNumber>
    </recommendedName>
    <alternativeName>
        <fullName evidence="4">Protein ROOT DETERMINED NODULATION 2</fullName>
        <shortName evidence="4">MtRDN2</shortName>
    </alternativeName>
</protein>